<feature type="initiator methionine" description="Removed" evidence="4">
    <location>
        <position position="1"/>
    </location>
</feature>
<feature type="chain" id="PRO_0000083965" description="(R)-2-hydroxyglutaryl-CoA dehydratase activating ATPase">
    <location>
        <begin position="2"/>
        <end position="260"/>
    </location>
</feature>
<feature type="binding site" evidence="2 11">
    <location>
        <begin position="12"/>
        <end position="16"/>
    </location>
    <ligand>
        <name>ATP</name>
        <dbReference type="ChEBI" id="CHEBI:30616"/>
    </ligand>
</feature>
<feature type="binding site" evidence="2 11">
    <location>
        <position position="127"/>
    </location>
    <ligand>
        <name>[4Fe-4S] cluster</name>
        <dbReference type="ChEBI" id="CHEBI:49883"/>
        <note>ligand shared between dimeric partners</note>
    </ligand>
</feature>
<feature type="binding site" evidence="2 11">
    <location>
        <position position="166"/>
    </location>
    <ligand>
        <name>[4Fe-4S] cluster</name>
        <dbReference type="ChEBI" id="CHEBI:49883"/>
        <note>ligand shared between dimeric partners</note>
    </ligand>
</feature>
<feature type="binding site" evidence="2 11">
    <location>
        <position position="220"/>
    </location>
    <ligand>
        <name>ATP</name>
        <dbReference type="ChEBI" id="CHEBI:30616"/>
    </ligand>
</feature>
<feature type="binding site" evidence="2 11">
    <location>
        <position position="243"/>
    </location>
    <ligand>
        <name>ATP</name>
        <dbReference type="ChEBI" id="CHEBI:30616"/>
    </ligand>
</feature>
<feature type="sequence conflict" description="In Ref. 3; CAA32464." evidence="8" ref="3">
    <original>A</original>
    <variation>P</variation>
    <location>
        <position position="196"/>
    </location>
</feature>
<feature type="sequence conflict" description="In Ref. 3; CAA32464." evidence="8" ref="3">
    <original>V</original>
    <variation>L</variation>
    <location>
        <position position="209"/>
    </location>
</feature>
<feature type="sequence conflict" description="In Ref. 3; CAA32464." evidence="8" ref="3">
    <original>MTGGVAQNYGV</original>
    <variation>HDRRCSPELWL</variation>
    <location>
        <begin position="214"/>
        <end position="224"/>
    </location>
</feature>
<feature type="strand" evidence="12">
    <location>
        <begin position="4"/>
        <end position="10"/>
    </location>
</feature>
<feature type="strand" evidence="12">
    <location>
        <begin position="12"/>
        <end position="21"/>
    </location>
</feature>
<feature type="turn" evidence="12">
    <location>
        <begin position="22"/>
        <end position="24"/>
    </location>
</feature>
<feature type="strand" evidence="12">
    <location>
        <begin position="25"/>
        <end position="33"/>
    </location>
</feature>
<feature type="helix" evidence="12">
    <location>
        <begin position="40"/>
        <end position="52"/>
    </location>
</feature>
<feature type="helix" evidence="12">
    <location>
        <begin position="56"/>
        <end position="58"/>
    </location>
</feature>
<feature type="strand" evidence="12">
    <location>
        <begin position="60"/>
        <end position="66"/>
    </location>
</feature>
<feature type="turn" evidence="12">
    <location>
        <begin position="67"/>
        <end position="75"/>
    </location>
</feature>
<feature type="strand" evidence="12">
    <location>
        <begin position="77"/>
        <end position="80"/>
    </location>
</feature>
<feature type="helix" evidence="12">
    <location>
        <begin position="82"/>
        <end position="93"/>
    </location>
</feature>
<feature type="strand" evidence="12">
    <location>
        <begin position="99"/>
        <end position="104"/>
    </location>
</feature>
<feature type="strand" evidence="12">
    <location>
        <begin position="107"/>
        <end position="114"/>
    </location>
</feature>
<feature type="strand" evidence="12">
    <location>
        <begin position="117"/>
        <end position="126"/>
    </location>
</feature>
<feature type="helix" evidence="12">
    <location>
        <begin position="132"/>
        <end position="142"/>
    </location>
</feature>
<feature type="turn" evidence="12">
    <location>
        <begin position="146"/>
        <end position="148"/>
    </location>
</feature>
<feature type="helix" evidence="12">
    <location>
        <begin position="149"/>
        <end position="153"/>
    </location>
</feature>
<feature type="helix" evidence="12">
    <location>
        <begin position="167"/>
        <end position="179"/>
    </location>
</feature>
<feature type="helix" evidence="12">
    <location>
        <begin position="184"/>
        <end position="204"/>
    </location>
</feature>
<feature type="strand" evidence="12">
    <location>
        <begin position="210"/>
        <end position="216"/>
    </location>
</feature>
<feature type="helix" evidence="12">
    <location>
        <begin position="217"/>
        <end position="220"/>
    </location>
</feature>
<feature type="helix" evidence="12">
    <location>
        <begin position="222"/>
        <end position="232"/>
    </location>
</feature>
<feature type="helix" evidence="12">
    <location>
        <begin position="240"/>
        <end position="244"/>
    </location>
</feature>
<feature type="helix" evidence="12">
    <location>
        <begin position="245"/>
        <end position="257"/>
    </location>
</feature>
<evidence type="ECO:0000269" key="1">
    <source>
    </source>
</evidence>
<evidence type="ECO:0000269" key="2">
    <source>
    </source>
</evidence>
<evidence type="ECO:0000269" key="3">
    <source>
    </source>
</evidence>
<evidence type="ECO:0000269" key="4">
    <source>
    </source>
</evidence>
<evidence type="ECO:0000303" key="5">
    <source>
    </source>
</evidence>
<evidence type="ECO:0000303" key="6">
    <source>
    </source>
</evidence>
<evidence type="ECO:0000303" key="7">
    <source>
    </source>
</evidence>
<evidence type="ECO:0000305" key="8"/>
<evidence type="ECO:0000305" key="9">
    <source>
    </source>
</evidence>
<evidence type="ECO:0000305" key="10">
    <source>
    </source>
</evidence>
<evidence type="ECO:0007744" key="11">
    <source>
        <dbReference type="PDB" id="1HUX"/>
    </source>
</evidence>
<evidence type="ECO:0007829" key="12">
    <source>
        <dbReference type="PDB" id="1HUX"/>
    </source>
</evidence>
<sequence>MSIYTLGIDVGSTASKCIILKDGKEIVAKSLVAVGTGTSGPARSISEVLENAHMKKEDMAFTLATGYGRNSLEGIADKQMSELSCHAMGASFIWPNVHTVIDIGGQDVKVIHVENGTMTNFQMNDKCAAGTGRFLDVMANILEVKVSDLAELGAKSTKRVAISSTCTVFAESEVISQLSKGTDKIDIIAGIHRSVASRVIGLANRVGIVKDVVMTGGVAQNYGVRGALEEGLGVEIKTSPLAQYNGALGAALYAYKKAAK</sequence>
<keyword id="KW-0002">3D-structure</keyword>
<keyword id="KW-0004">4Fe-4S</keyword>
<keyword id="KW-0067">ATP-binding</keyword>
<keyword id="KW-0903">Direct protein sequencing</keyword>
<keyword id="KW-0378">Hydrolase</keyword>
<keyword id="KW-0408">Iron</keyword>
<keyword id="KW-0411">Iron-sulfur</keyword>
<keyword id="KW-0460">Magnesium</keyword>
<keyword id="KW-0479">Metal-binding</keyword>
<keyword id="KW-0547">Nucleotide-binding</keyword>
<keyword id="KW-1185">Reference proteome</keyword>
<proteinExistence type="evidence at protein level"/>
<accession>P11568</accession>
<accession>D2RM68</accession>
<accession>Q44042</accession>
<organism>
    <name type="scientific">Acidaminococcus fermentans (strain ATCC 25085 / DSM 20731 / CCUG 9996 / CIP 106432 / VR4)</name>
    <dbReference type="NCBI Taxonomy" id="591001"/>
    <lineage>
        <taxon>Bacteria</taxon>
        <taxon>Bacillati</taxon>
        <taxon>Bacillota</taxon>
        <taxon>Negativicutes</taxon>
        <taxon>Acidaminococcales</taxon>
        <taxon>Acidaminococcaceae</taxon>
        <taxon>Acidaminococcus</taxon>
    </lineage>
</organism>
<reference key="1">
    <citation type="journal article" date="1993" name="FEBS Lett.">
        <title>Identification of the gene encoding the activator of (R)-2-hydroxyglutaryl-CoA dehydratase from Acidaminococcus fermentans by gene expression in Escherichia coli.</title>
        <authorList>
            <person name="Bendrat K."/>
            <person name="Mueller U."/>
            <person name="Klees A.-G."/>
            <person name="Buckel W."/>
        </authorList>
    </citation>
    <scope>NUCLEOTIDE SEQUENCE [GENOMIC DNA]</scope>
</reference>
<reference key="2">
    <citation type="journal article" date="2010" name="Stand. Genomic Sci.">
        <title>Complete genome sequence of Acidaminococcus fermentans type strain (VR4).</title>
        <authorList>
            <person name="Chang Y.J."/>
            <person name="Pukall R."/>
            <person name="Saunders E."/>
            <person name="Lapidus A."/>
            <person name="Copeland A."/>
            <person name="Nolan M."/>
            <person name="Glavina Del Rio T."/>
            <person name="Lucas S."/>
            <person name="Chen F."/>
            <person name="Tice H."/>
            <person name="Cheng J.F."/>
            <person name="Han C."/>
            <person name="Detter J.C."/>
            <person name="Bruce D."/>
            <person name="Goodwin L."/>
            <person name="Pitluck S."/>
            <person name="Mikhailova N."/>
            <person name="Liolios K."/>
            <person name="Pati A."/>
            <person name="Ivanova N."/>
            <person name="Mavromatis K."/>
            <person name="Chen A."/>
            <person name="Palaniappan K."/>
            <person name="Land M."/>
            <person name="Hauser L."/>
            <person name="Jeffries C.D."/>
            <person name="Brettin T."/>
            <person name="Rohde M."/>
            <person name="Goker M."/>
            <person name="Bristow J."/>
            <person name="Eisen J.A."/>
            <person name="Markowitz V."/>
            <person name="Hugenholtz P."/>
            <person name="Kyrpides N.C."/>
            <person name="Klenk H.P."/>
        </authorList>
    </citation>
    <scope>NUCLEOTIDE SEQUENCE [LARGE SCALE GENOMIC DNA]</scope>
    <source>
        <strain>ATCC 25085 / DSM 20731 / CCUG 9996 / CIP 106432 / VR4</strain>
    </source>
</reference>
<reference key="3">
    <citation type="journal article" date="1989" name="Eur. J. Biochem.">
        <title>Cloning and sequencing of the genes of 2-hydoxyglutaryl-CoA dehydratase from Acidaminococcus fermentans.</title>
        <authorList>
            <person name="Dutscho R."/>
            <person name="Wohlfarth G."/>
            <person name="Buckel P."/>
            <person name="Buckel W."/>
        </authorList>
    </citation>
    <scope>NUCLEOTIDE SEQUENCE [GENOMIC DNA] OF 129-260</scope>
</reference>
<reference key="4">
    <citation type="journal article" date="1995" name="Eur. J. Biochem.">
        <title>Activation of (R)-2-hydroxyglutaryl-CoA dehydratase from Acidaminococcus fermentans.</title>
        <authorList>
            <person name="Mueller U."/>
            <person name="Buckel W."/>
        </authorList>
    </citation>
    <scope>PROTEIN SEQUENCE OF 2-11</scope>
    <scope>FUNCTION</scope>
    <scope>CATALYTIC ACTIVITY</scope>
    <scope>COFACTOR</scope>
    <scope>SUBUNIT</scope>
    <scope>PATHWAY</scope>
    <source>
        <strain>ATCC 25085 / DSM 20731 / CCUG 9996 / CIP 106432 / VR4</strain>
    </source>
</reference>
<reference key="5">
    <citation type="journal article" date="1987" name="Eur. J. Biochem.">
        <title>Purification of 2-hydroxyglutaryl-CoA dehydratase from Acidaminococcus fermentans. An iron-sulfur protein.</title>
        <authorList>
            <person name="Schweiger G."/>
            <person name="Dutscho R."/>
            <person name="Buckel W."/>
        </authorList>
    </citation>
    <scope>FUNCTION</scope>
    <scope>CATALYTIC ACTIVITY</scope>
    <scope>ACTIVITY REGULATION</scope>
    <scope>SUBUNIT</scope>
    <source>
        <strain>ATCC 25085 / DSM 20731 / CCUG 9996 / CIP 106432 / VR4</strain>
    </source>
</reference>
<reference key="6">
    <citation type="journal article" date="2000" name="Eur. J. Biochem.">
        <title>The iron-sulfur clusters in 2-hydroxyglutaryl-CoA dehydratase from Acidaminococcus fermentans. Biochemical and spectroscopic investigations.</title>
        <authorList>
            <person name="Hans M."/>
            <person name="Buckel W."/>
            <person name="Bill E."/>
        </authorList>
    </citation>
    <scope>COFACTOR</scope>
    <source>
        <strain>ATCC 25085 / DSM 20731 / CCUG 9996 / CIP 106432 / VR4</strain>
    </source>
</reference>
<reference key="7">
    <citation type="journal article" date="2001" name="J. Mol. Biol.">
        <title>Crystal structure of the Acidaminococcus fermentans 2-hydroxyglutaryl-CoA dehydratase component A.</title>
        <authorList>
            <person name="Locher K.P."/>
            <person name="Hans M."/>
            <person name="Yeh A.P."/>
            <person name="Schmid B."/>
            <person name="Buckel W."/>
            <person name="Rees D.C."/>
        </authorList>
    </citation>
    <scope>X-RAY CRYSTALLOGRAPHY (3.0 ANGSTROMS) IN COMPLEX WITH ATP ANALOG AND IRON-SULFUR (4FE-4S)</scope>
    <scope>COFACTOR</scope>
    <scope>SUBUNIT</scope>
</reference>
<gene>
    <name evidence="7" type="primary">hgdC</name>
    <name type="ordered locus">Acfer_1816</name>
</gene>
<comment type="function">
    <text evidence="4 9">Involved in the fermentation of L-glutamate via the hydroxyglutarate pathway. HgdC (CompA) has a very low ATPase activity, whose the role is to activate dehydratase HgdA-HgdB complex and then maintain an appropriate redox state via an ATP-dependent electron transfer. The dehydratase requires only catalytic amounts of ATP and substoichiometric amounts of HgdC (CompA) to be functional.</text>
</comment>
<comment type="catalytic activity">
    <reaction evidence="9 10">
        <text>ATP + H2O = ADP + phosphate + H(+)</text>
        <dbReference type="Rhea" id="RHEA:13065"/>
        <dbReference type="ChEBI" id="CHEBI:15377"/>
        <dbReference type="ChEBI" id="CHEBI:15378"/>
        <dbReference type="ChEBI" id="CHEBI:30616"/>
        <dbReference type="ChEBI" id="CHEBI:43474"/>
        <dbReference type="ChEBI" id="CHEBI:456216"/>
    </reaction>
</comment>
<comment type="cofactor">
    <cofactor evidence="1 2 4">
        <name>[4Fe-4S] cluster</name>
        <dbReference type="ChEBI" id="CHEBI:49883"/>
    </cofactor>
    <text evidence="1 2 4">Binds 1 [4Fe-4S] cluster per dimer.</text>
</comment>
<comment type="cofactor">
    <cofactor evidence="1 2 10">
        <name>Mg(2+)</name>
        <dbReference type="ChEBI" id="CHEBI:18420"/>
    </cofactor>
</comment>
<comment type="activity regulation">
    <text evidence="3">Inactivated by exposure to air within less than 15 minutes.</text>
</comment>
<comment type="pathway">
    <text evidence="10">Amino-acid degradation; L-glutamate degradation via hydroxyglutarate pathway; crotonoyl-CoA from L-glutamate: step 4/5.</text>
</comment>
<comment type="subunit">
    <text evidence="2 3 4">Homodimer.</text>
</comment>
<comment type="miscellaneous">
    <text evidence="9">HgdC (CompA) seems to require NADH to be functional.</text>
</comment>
<comment type="similarity">
    <text evidence="8">Belongs to the HgdC family.</text>
</comment>
<name>HGDC_ACIFV</name>
<dbReference type="EC" id="3.6.1.-" evidence="9 10"/>
<dbReference type="EMBL" id="X59645">
    <property type="protein sequence ID" value="CAA42196.1"/>
    <property type="molecule type" value="Genomic_DNA"/>
</dbReference>
<dbReference type="EMBL" id="CP001859">
    <property type="protein sequence ID" value="ADB48170.1"/>
    <property type="molecule type" value="Genomic_DNA"/>
</dbReference>
<dbReference type="EMBL" id="X14252">
    <property type="protein sequence ID" value="CAA32464.1"/>
    <property type="molecule type" value="Genomic_DNA"/>
</dbReference>
<dbReference type="PIR" id="S36105">
    <property type="entry name" value="S36105"/>
</dbReference>
<dbReference type="RefSeq" id="WP_012939153.1">
    <property type="nucleotide sequence ID" value="NC_013740.1"/>
</dbReference>
<dbReference type="PDB" id="1HUX">
    <property type="method" value="X-ray"/>
    <property type="resolution" value="3.00 A"/>
    <property type="chains" value="A/B=1-260"/>
</dbReference>
<dbReference type="PDBsum" id="1HUX"/>
<dbReference type="SMR" id="P11568"/>
<dbReference type="STRING" id="591001.Acfer_1816"/>
<dbReference type="GeneID" id="78335512"/>
<dbReference type="KEGG" id="afn:Acfer_1816"/>
<dbReference type="eggNOG" id="COG1924">
    <property type="taxonomic scope" value="Bacteria"/>
</dbReference>
<dbReference type="HOGENOM" id="CLU_066597_0_0_9"/>
<dbReference type="OrthoDB" id="9778513at2"/>
<dbReference type="BioCyc" id="MetaCyc:MONOMER-20614"/>
<dbReference type="BRENDA" id="4.2.1.167">
    <property type="organism ID" value="85"/>
</dbReference>
<dbReference type="BRENDA" id="5.6.1.9">
    <property type="organism ID" value="85"/>
</dbReference>
<dbReference type="UniPathway" id="UPA00533">
    <property type="reaction ID" value="UER00687"/>
</dbReference>
<dbReference type="EvolutionaryTrace" id="P11568"/>
<dbReference type="Proteomes" id="UP000001902">
    <property type="component" value="Chromosome"/>
</dbReference>
<dbReference type="GO" id="GO:0051539">
    <property type="term" value="F:4 iron, 4 sulfur cluster binding"/>
    <property type="evidence" value="ECO:0007669"/>
    <property type="project" value="UniProtKB-KW"/>
</dbReference>
<dbReference type="GO" id="GO:0005524">
    <property type="term" value="F:ATP binding"/>
    <property type="evidence" value="ECO:0007669"/>
    <property type="project" value="UniProtKB-KW"/>
</dbReference>
<dbReference type="GO" id="GO:0016887">
    <property type="term" value="F:ATP hydrolysis activity"/>
    <property type="evidence" value="ECO:0007669"/>
    <property type="project" value="RHEA"/>
</dbReference>
<dbReference type="GO" id="GO:0046872">
    <property type="term" value="F:metal ion binding"/>
    <property type="evidence" value="ECO:0007669"/>
    <property type="project" value="UniProtKB-KW"/>
</dbReference>
<dbReference type="GO" id="GO:0019552">
    <property type="term" value="P:glutamate catabolic process via 2-hydroxyglutarate"/>
    <property type="evidence" value="ECO:0007669"/>
    <property type="project" value="UniProtKB-UniPathway"/>
</dbReference>
<dbReference type="FunFam" id="3.30.420.40:FF:000217">
    <property type="entry name" value="2-hydroxyisocaproyl-CoA dehydratase activator"/>
    <property type="match status" value="1"/>
</dbReference>
<dbReference type="Gene3D" id="3.30.420.40">
    <property type="match status" value="2"/>
</dbReference>
<dbReference type="InterPro" id="IPR002731">
    <property type="entry name" value="ATPase_BadF"/>
</dbReference>
<dbReference type="InterPro" id="IPR043129">
    <property type="entry name" value="ATPase_NBD"/>
</dbReference>
<dbReference type="InterPro" id="IPR008275">
    <property type="entry name" value="CoA_E_activase_dom"/>
</dbReference>
<dbReference type="InterPro" id="IPR051805">
    <property type="entry name" value="Dehydratase_Activator_Redct"/>
</dbReference>
<dbReference type="NCBIfam" id="TIGR00241">
    <property type="entry name" value="CoA_E_activ"/>
    <property type="match status" value="1"/>
</dbReference>
<dbReference type="PANTHER" id="PTHR32329:SF2">
    <property type="entry name" value="BIFUNCTIONAL PROTEIN [INCLUDES 2-HYDROXYACYL-COA DEHYDRATASE (N-TER) AND ITS ACTIVATOR DOMAIN (C_TERM)"/>
    <property type="match status" value="1"/>
</dbReference>
<dbReference type="PANTHER" id="PTHR32329">
    <property type="entry name" value="BIFUNCTIONAL PROTEIN [INCLUDES 2-HYDROXYACYL-COA DEHYDRATASE (N-TER) AND ITS ACTIVATOR DOMAIN (C_TERM)-RELATED"/>
    <property type="match status" value="1"/>
</dbReference>
<dbReference type="Pfam" id="PF01869">
    <property type="entry name" value="BcrAD_BadFG"/>
    <property type="match status" value="1"/>
</dbReference>
<dbReference type="SUPFAM" id="SSF53067">
    <property type="entry name" value="Actin-like ATPase domain"/>
    <property type="match status" value="1"/>
</dbReference>
<protein>
    <recommendedName>
        <fullName evidence="8">(R)-2-hydroxyglutaryl-CoA dehydratase activating ATPase</fullName>
        <ecNumber evidence="9 10">3.6.1.-</ecNumber>
    </recommendedName>
    <alternativeName>
        <fullName evidence="8">(R)-2-hydroxyglutaryl-CoA dehydratase activase</fullName>
    </alternativeName>
    <alternativeName>
        <fullName evidence="6">(R)-2-hydroxyglutaryl-CoA dehydratase, component A</fullName>
    </alternativeName>
    <alternativeName>
        <fullName evidence="5">ATP-coupled electron transfer protein HgdC</fullName>
    </alternativeName>
    <alternativeName>
        <fullName evidence="7">Activator of (R)-2-hydroxyglutaryl-CoA dehydratase</fullName>
    </alternativeName>
</protein>